<name>NANO1_HUMAN</name>
<feature type="chain" id="PRO_0000207685" description="Nanos homolog 1">
    <location>
        <begin position="1"/>
        <end position="292"/>
    </location>
</feature>
<feature type="zinc finger region" description="Nanos-type" evidence="2">
    <location>
        <begin position="213"/>
        <end position="267"/>
    </location>
</feature>
<feature type="region of interest" description="Disordered" evidence="3">
    <location>
        <begin position="1"/>
        <end position="41"/>
    </location>
</feature>
<feature type="region of interest" description="Essential for its translational repressor activity" evidence="1">
    <location>
        <begin position="40"/>
        <end position="56"/>
    </location>
</feature>
<feature type="region of interest" description="Disordered" evidence="3">
    <location>
        <begin position="68"/>
        <end position="121"/>
    </location>
</feature>
<feature type="region of interest" description="Disordered" evidence="3">
    <location>
        <begin position="268"/>
        <end position="292"/>
    </location>
</feature>
<feature type="short sequence motif" description="C2HC 1" evidence="2">
    <location>
        <begin position="214"/>
        <end position="241"/>
    </location>
</feature>
<feature type="short sequence motif" description="C2HC 2" evidence="2">
    <location>
        <begin position="249"/>
        <end position="265"/>
    </location>
</feature>
<feature type="compositionally biased region" description="Low complexity" evidence="3">
    <location>
        <begin position="76"/>
        <end position="87"/>
    </location>
</feature>
<feature type="compositionally biased region" description="Acidic residues" evidence="3">
    <location>
        <begin position="104"/>
        <end position="115"/>
    </location>
</feature>
<feature type="compositionally biased region" description="Pro residues" evidence="3">
    <location>
        <begin position="269"/>
        <end position="280"/>
    </location>
</feature>
<feature type="compositionally biased region" description="Basic and acidic residues" evidence="3">
    <location>
        <begin position="281"/>
        <end position="292"/>
    </location>
</feature>
<feature type="binding site" evidence="2">
    <location>
        <position position="214"/>
    </location>
    <ligand>
        <name>Zn(2+)</name>
        <dbReference type="ChEBI" id="CHEBI:29105"/>
        <label>1</label>
    </ligand>
</feature>
<feature type="binding site" evidence="2">
    <location>
        <position position="217"/>
    </location>
    <ligand>
        <name>Zn(2+)</name>
        <dbReference type="ChEBI" id="CHEBI:29105"/>
        <label>1</label>
    </ligand>
</feature>
<feature type="binding site" evidence="2">
    <location>
        <position position="230"/>
    </location>
    <ligand>
        <name>Zn(2+)</name>
        <dbReference type="ChEBI" id="CHEBI:29105"/>
        <label>1</label>
    </ligand>
</feature>
<feature type="binding site" evidence="2">
    <location>
        <position position="241"/>
    </location>
    <ligand>
        <name>Zn(2+)</name>
        <dbReference type="ChEBI" id="CHEBI:29105"/>
        <label>1</label>
    </ligand>
</feature>
<feature type="binding site" evidence="2">
    <location>
        <position position="249"/>
    </location>
    <ligand>
        <name>Zn(2+)</name>
        <dbReference type="ChEBI" id="CHEBI:29105"/>
        <label>2</label>
    </ligand>
</feature>
<feature type="binding site" evidence="2">
    <location>
        <position position="252"/>
    </location>
    <ligand>
        <name>Zn(2+)</name>
        <dbReference type="ChEBI" id="CHEBI:29105"/>
        <label>2</label>
    </ligand>
</feature>
<feature type="binding site" evidence="2">
    <location>
        <position position="260"/>
    </location>
    <ligand>
        <name>Zn(2+)</name>
        <dbReference type="ChEBI" id="CHEBI:29105"/>
        <label>2</label>
    </ligand>
</feature>
<feature type="binding site" evidence="2">
    <location>
        <position position="265"/>
    </location>
    <ligand>
        <name>Zn(2+)</name>
        <dbReference type="ChEBI" id="CHEBI:29105"/>
        <label>2</label>
    </ligand>
</feature>
<feature type="sequence variant" id="VAR_070569" description="In dbSNP:rs191267549." evidence="10">
    <original>P</original>
    <variation>T</variation>
    <location>
        <position position="34"/>
    </location>
</feature>
<feature type="sequence variant" id="VAR_070570" description="In SPGF12." evidence="10">
    <location>
        <position position="78"/>
    </location>
</feature>
<feature type="sequence variant" id="VAR_070571" description="In SPGF12; dbSNP:rs538539239." evidence="10">
    <location>
        <position position="173"/>
    </location>
</feature>
<feature type="sequence variant" id="VAR_070572" description="Found in a patient affected by oligo-astheno-teratozoospermia also carrying Y-276 on the same allele; uncertain significance; dbSNP:rs587777767." evidence="10">
    <original>R</original>
    <variation>H</variation>
    <location>
        <position position="246"/>
    </location>
</feature>
<feature type="sequence variant" id="VAR_070573" description="Found in a patient affected by oligo-astheno-teratozoospermia also carrying H-246 on the same allele; uncertain significance; requires 2 nucleotide substitutions; dbSNP:rs587777768." evidence="10">
    <original>R</original>
    <variation>Y</variation>
    <location>
        <position position="276"/>
    </location>
</feature>
<feature type="helix" evidence="11">
    <location>
        <begin position="43"/>
        <end position="47"/>
    </location>
</feature>
<feature type="turn" evidence="11">
    <location>
        <begin position="51"/>
        <end position="53"/>
    </location>
</feature>
<dbReference type="EMBL" id="AF275269">
    <property type="protein sequence ID" value="AAL36982.2"/>
    <property type="molecule type" value="mRNA"/>
</dbReference>
<dbReference type="EMBL" id="AF458985">
    <property type="protein sequence ID" value="AAQ04765.1"/>
    <property type="molecule type" value="mRNA"/>
</dbReference>
<dbReference type="EMBL" id="AL157788">
    <property type="status" value="NOT_ANNOTATED_CDS"/>
    <property type="molecule type" value="Genomic_DNA"/>
</dbReference>
<dbReference type="CCDS" id="CCDS7607.1"/>
<dbReference type="RefSeq" id="NP_955631.1">
    <property type="nucleotide sequence ID" value="NM_199461.4"/>
</dbReference>
<dbReference type="PDB" id="4CQO">
    <property type="method" value="X-ray"/>
    <property type="resolution" value="2.80 A"/>
    <property type="chains" value="B/D=40-56"/>
</dbReference>
<dbReference type="PDBsum" id="4CQO"/>
<dbReference type="SMR" id="Q8WY41"/>
<dbReference type="BioGRID" id="131092">
    <property type="interactions" value="28"/>
</dbReference>
<dbReference type="ELM" id="Q8WY41"/>
<dbReference type="FunCoup" id="Q8WY41">
    <property type="interactions" value="395"/>
</dbReference>
<dbReference type="IntAct" id="Q8WY41">
    <property type="interactions" value="16"/>
</dbReference>
<dbReference type="STRING" id="9606.ENSP00000393275"/>
<dbReference type="iPTMnet" id="Q8WY41"/>
<dbReference type="PhosphoSitePlus" id="Q8WY41"/>
<dbReference type="BioMuta" id="NANOS1"/>
<dbReference type="DMDM" id="41688589"/>
<dbReference type="MassIVE" id="Q8WY41"/>
<dbReference type="PaxDb" id="9606-ENSP00000393275"/>
<dbReference type="PeptideAtlas" id="Q8WY41"/>
<dbReference type="ProteomicsDB" id="75126"/>
<dbReference type="Antibodypedia" id="32079">
    <property type="antibodies" value="298 antibodies from 32 providers"/>
</dbReference>
<dbReference type="DNASU" id="340719"/>
<dbReference type="Ensembl" id="ENST00000425699.3">
    <property type="protein sequence ID" value="ENSP00000393275.1"/>
    <property type="gene ID" value="ENSG00000188613.7"/>
</dbReference>
<dbReference type="GeneID" id="340719"/>
<dbReference type="KEGG" id="hsa:340719"/>
<dbReference type="MANE-Select" id="ENST00000425699.3">
    <property type="protein sequence ID" value="ENSP00000393275.1"/>
    <property type="RefSeq nucleotide sequence ID" value="NM_199461.4"/>
    <property type="RefSeq protein sequence ID" value="NP_955631.1"/>
</dbReference>
<dbReference type="UCSC" id="uc009xzf.2">
    <property type="organism name" value="human"/>
</dbReference>
<dbReference type="AGR" id="HGNC:23044"/>
<dbReference type="CTD" id="340719"/>
<dbReference type="DisGeNET" id="340719"/>
<dbReference type="GeneCards" id="NANOS1"/>
<dbReference type="HGNC" id="HGNC:23044">
    <property type="gene designation" value="NANOS1"/>
</dbReference>
<dbReference type="HPA" id="ENSG00000188613">
    <property type="expression patterns" value="Tissue enhanced (skeletal)"/>
</dbReference>
<dbReference type="MalaCards" id="NANOS1"/>
<dbReference type="MIM" id="608226">
    <property type="type" value="gene"/>
</dbReference>
<dbReference type="MIM" id="615413">
    <property type="type" value="phenotype"/>
</dbReference>
<dbReference type="neXtProt" id="NX_Q8WY41"/>
<dbReference type="OpenTargets" id="ENSG00000188613"/>
<dbReference type="Orphanet" id="399805">
    <property type="disease" value="Male infertility with azoospermia or oligozoospermia due to single gene mutation"/>
</dbReference>
<dbReference type="PharmGKB" id="PA134876543"/>
<dbReference type="VEuPathDB" id="HostDB:ENSG00000188613"/>
<dbReference type="eggNOG" id="KOG4602">
    <property type="taxonomic scope" value="Eukaryota"/>
</dbReference>
<dbReference type="GeneTree" id="ENSGT00950000183135"/>
<dbReference type="HOGENOM" id="CLU_094055_0_0_1"/>
<dbReference type="InParanoid" id="Q8WY41"/>
<dbReference type="OMA" id="CCSPHGG"/>
<dbReference type="OrthoDB" id="10010129at2759"/>
<dbReference type="PAN-GO" id="Q8WY41">
    <property type="GO annotations" value="4 GO annotations based on evolutionary models"/>
</dbReference>
<dbReference type="PhylomeDB" id="Q8WY41"/>
<dbReference type="TreeFam" id="TF326882"/>
<dbReference type="PathwayCommons" id="Q8WY41"/>
<dbReference type="SignaLink" id="Q8WY41"/>
<dbReference type="SIGNOR" id="Q8WY41"/>
<dbReference type="BioGRID-ORCS" id="340719">
    <property type="hits" value="26 hits in 1139 CRISPR screens"/>
</dbReference>
<dbReference type="ChiTaRS" id="NANOS1">
    <property type="organism name" value="human"/>
</dbReference>
<dbReference type="GenomeRNAi" id="340719"/>
<dbReference type="Pharos" id="Q8WY41">
    <property type="development level" value="Tbio"/>
</dbReference>
<dbReference type="PRO" id="PR:Q8WY41"/>
<dbReference type="Proteomes" id="UP000005640">
    <property type="component" value="Chromosome 10"/>
</dbReference>
<dbReference type="RNAct" id="Q8WY41">
    <property type="molecule type" value="protein"/>
</dbReference>
<dbReference type="Bgee" id="ENSG00000188613">
    <property type="expression patterns" value="Expressed in secondary oocyte and 136 other cell types or tissues"/>
</dbReference>
<dbReference type="ExpressionAtlas" id="Q8WY41">
    <property type="expression patterns" value="baseline and differential"/>
</dbReference>
<dbReference type="GO" id="GO:0005737">
    <property type="term" value="C:cytoplasm"/>
    <property type="evidence" value="ECO:0000314"/>
    <property type="project" value="UniProtKB"/>
</dbReference>
<dbReference type="GO" id="GO:0048471">
    <property type="term" value="C:perinuclear region of cytoplasm"/>
    <property type="evidence" value="ECO:0000314"/>
    <property type="project" value="UniProtKB"/>
</dbReference>
<dbReference type="GO" id="GO:0008047">
    <property type="term" value="F:enzyme activator activity"/>
    <property type="evidence" value="ECO:0000314"/>
    <property type="project" value="BHF-UCL"/>
</dbReference>
<dbReference type="GO" id="GO:0003729">
    <property type="term" value="F:mRNA binding"/>
    <property type="evidence" value="ECO:0000318"/>
    <property type="project" value="GO_Central"/>
</dbReference>
<dbReference type="GO" id="GO:0030371">
    <property type="term" value="F:translation repressor activity"/>
    <property type="evidence" value="ECO:0000250"/>
    <property type="project" value="UniProtKB"/>
</dbReference>
<dbReference type="GO" id="GO:0008270">
    <property type="term" value="F:zinc ion binding"/>
    <property type="evidence" value="ECO:0007669"/>
    <property type="project" value="UniProtKB-KW"/>
</dbReference>
<dbReference type="GO" id="GO:0016477">
    <property type="term" value="P:cell migration"/>
    <property type="evidence" value="ECO:0000314"/>
    <property type="project" value="UniProtKB"/>
</dbReference>
<dbReference type="GO" id="GO:0098749">
    <property type="term" value="P:cerebellar neuron development"/>
    <property type="evidence" value="ECO:0007669"/>
    <property type="project" value="Ensembl"/>
</dbReference>
<dbReference type="GO" id="GO:0010631">
    <property type="term" value="P:epithelial cell migration"/>
    <property type="evidence" value="ECO:0000314"/>
    <property type="project" value="UniProtKB"/>
</dbReference>
<dbReference type="GO" id="GO:0061157">
    <property type="term" value="P:mRNA destabilization"/>
    <property type="evidence" value="ECO:0000314"/>
    <property type="project" value="BHF-UCL"/>
</dbReference>
<dbReference type="GO" id="GO:0017148">
    <property type="term" value="P:negative regulation of translation"/>
    <property type="evidence" value="ECO:0000314"/>
    <property type="project" value="BHF-UCL"/>
</dbReference>
<dbReference type="GO" id="GO:0048477">
    <property type="term" value="P:oogenesis"/>
    <property type="evidence" value="ECO:0000318"/>
    <property type="project" value="GO_Central"/>
</dbReference>
<dbReference type="GO" id="GO:0010608">
    <property type="term" value="P:post-transcriptional regulation of gene expression"/>
    <property type="evidence" value="ECO:0000314"/>
    <property type="project" value="MGI"/>
</dbReference>
<dbReference type="GO" id="GO:0001558">
    <property type="term" value="P:regulation of cell growth"/>
    <property type="evidence" value="ECO:0007669"/>
    <property type="project" value="Ensembl"/>
</dbReference>
<dbReference type="GO" id="GO:0001894">
    <property type="term" value="P:tissue homeostasis"/>
    <property type="evidence" value="ECO:0007669"/>
    <property type="project" value="Ensembl"/>
</dbReference>
<dbReference type="FunFam" id="4.10.60.30:FF:000001">
    <property type="entry name" value="nanos homolog 3"/>
    <property type="match status" value="1"/>
</dbReference>
<dbReference type="Gene3D" id="4.10.60.30">
    <property type="entry name" value="Nanos, RNA-binding domain"/>
    <property type="match status" value="1"/>
</dbReference>
<dbReference type="IDEAL" id="IID00517"/>
<dbReference type="InterPro" id="IPR008705">
    <property type="entry name" value="Nanos/Xcar2"/>
</dbReference>
<dbReference type="InterPro" id="IPR038129">
    <property type="entry name" value="Nanos_sf"/>
</dbReference>
<dbReference type="InterPro" id="IPR024161">
    <property type="entry name" value="Znf_nanos-typ"/>
</dbReference>
<dbReference type="PANTHER" id="PTHR12887">
    <property type="entry name" value="NANOS PROTEIN"/>
    <property type="match status" value="1"/>
</dbReference>
<dbReference type="Pfam" id="PF05741">
    <property type="entry name" value="zf-nanos"/>
    <property type="match status" value="1"/>
</dbReference>
<dbReference type="PROSITE" id="PS51522">
    <property type="entry name" value="ZF_NANOS"/>
    <property type="match status" value="1"/>
</dbReference>
<reference key="1">
    <citation type="journal article" date="2003" name="Dev. Genes Evol.">
        <title>Conservation of a Pumilio-Nanos complex from Drosophila germ plasm to human germ cells.</title>
        <authorList>
            <person name="Jaruzelska J."/>
            <person name="Kotecki M."/>
            <person name="Kusz K."/>
            <person name="Spik A."/>
            <person name="Firpo M."/>
            <person name="Reijo Pera R.A."/>
        </authorList>
    </citation>
    <scope>NUCLEOTIDE SEQUENCE [MRNA]</scope>
    <scope>SUBCELLULAR LOCATION</scope>
    <scope>TISSUE SPECIFICITY</scope>
    <scope>INTERACTION WITH PUM2</scope>
    <source>
        <tissue>Testis</tissue>
    </source>
</reference>
<reference key="2">
    <citation type="journal article" date="2006" name="Cancer Res.">
        <title>E-cadherin regulates human Nanos1, which interacts with p120ctn and induces tumor cell migration and invasion.</title>
        <authorList>
            <person name="Strumane K."/>
            <person name="Bonnomet A."/>
            <person name="Stove C."/>
            <person name="Vandenbroucke R."/>
            <person name="Nawrocki-Raby B."/>
            <person name="Bruyneel E."/>
            <person name="Mareel M."/>
            <person name="Birembaut P."/>
            <person name="Berx G."/>
            <person name="van Roy F."/>
        </authorList>
    </citation>
    <scope>NUCLEOTIDE SEQUENCE [MRNA]</scope>
    <scope>FUNCTION</scope>
    <scope>SUBCELLULAR LOCATION</scope>
    <scope>INDUCTION</scope>
    <scope>INTERACTION WITH CTNND1 AND CTNNB1</scope>
    <scope>TISSUE SPECIFICITY</scope>
</reference>
<reference key="3">
    <citation type="journal article" date="2004" name="Nature">
        <title>The DNA sequence and comparative analysis of human chromosome 10.</title>
        <authorList>
            <person name="Deloukas P."/>
            <person name="Earthrowl M.E."/>
            <person name="Grafham D.V."/>
            <person name="Rubenfield M."/>
            <person name="French L."/>
            <person name="Steward C.A."/>
            <person name="Sims S.K."/>
            <person name="Jones M.C."/>
            <person name="Searle S."/>
            <person name="Scott C."/>
            <person name="Howe K."/>
            <person name="Hunt S.E."/>
            <person name="Andrews T.D."/>
            <person name="Gilbert J.G.R."/>
            <person name="Swarbreck D."/>
            <person name="Ashurst J.L."/>
            <person name="Taylor A."/>
            <person name="Battles J."/>
            <person name="Bird C.P."/>
            <person name="Ainscough R."/>
            <person name="Almeida J.P."/>
            <person name="Ashwell R.I.S."/>
            <person name="Ambrose K.D."/>
            <person name="Babbage A.K."/>
            <person name="Bagguley C.L."/>
            <person name="Bailey J."/>
            <person name="Banerjee R."/>
            <person name="Bates K."/>
            <person name="Beasley H."/>
            <person name="Bray-Allen S."/>
            <person name="Brown A.J."/>
            <person name="Brown J.Y."/>
            <person name="Burford D.C."/>
            <person name="Burrill W."/>
            <person name="Burton J."/>
            <person name="Cahill P."/>
            <person name="Camire D."/>
            <person name="Carter N.P."/>
            <person name="Chapman J.C."/>
            <person name="Clark S.Y."/>
            <person name="Clarke G."/>
            <person name="Clee C.M."/>
            <person name="Clegg S."/>
            <person name="Corby N."/>
            <person name="Coulson A."/>
            <person name="Dhami P."/>
            <person name="Dutta I."/>
            <person name="Dunn M."/>
            <person name="Faulkner L."/>
            <person name="Frankish A."/>
            <person name="Frankland J.A."/>
            <person name="Garner P."/>
            <person name="Garnett J."/>
            <person name="Gribble S."/>
            <person name="Griffiths C."/>
            <person name="Grocock R."/>
            <person name="Gustafson E."/>
            <person name="Hammond S."/>
            <person name="Harley J.L."/>
            <person name="Hart E."/>
            <person name="Heath P.D."/>
            <person name="Ho T.P."/>
            <person name="Hopkins B."/>
            <person name="Horne J."/>
            <person name="Howden P.J."/>
            <person name="Huckle E."/>
            <person name="Hynds C."/>
            <person name="Johnson C."/>
            <person name="Johnson D."/>
            <person name="Kana A."/>
            <person name="Kay M."/>
            <person name="Kimberley A.M."/>
            <person name="Kershaw J.K."/>
            <person name="Kokkinaki M."/>
            <person name="Laird G.K."/>
            <person name="Lawlor S."/>
            <person name="Lee H.M."/>
            <person name="Leongamornlert D.A."/>
            <person name="Laird G."/>
            <person name="Lloyd C."/>
            <person name="Lloyd D.M."/>
            <person name="Loveland J."/>
            <person name="Lovell J."/>
            <person name="McLaren S."/>
            <person name="McLay K.E."/>
            <person name="McMurray A."/>
            <person name="Mashreghi-Mohammadi M."/>
            <person name="Matthews L."/>
            <person name="Milne S."/>
            <person name="Nickerson T."/>
            <person name="Nguyen M."/>
            <person name="Overton-Larty E."/>
            <person name="Palmer S.A."/>
            <person name="Pearce A.V."/>
            <person name="Peck A.I."/>
            <person name="Pelan S."/>
            <person name="Phillimore B."/>
            <person name="Porter K."/>
            <person name="Rice C.M."/>
            <person name="Rogosin A."/>
            <person name="Ross M.T."/>
            <person name="Sarafidou T."/>
            <person name="Sehra H.K."/>
            <person name="Shownkeen R."/>
            <person name="Skuce C.D."/>
            <person name="Smith M."/>
            <person name="Standring L."/>
            <person name="Sycamore N."/>
            <person name="Tester J."/>
            <person name="Thorpe A."/>
            <person name="Torcasso W."/>
            <person name="Tracey A."/>
            <person name="Tromans A."/>
            <person name="Tsolas J."/>
            <person name="Wall M."/>
            <person name="Walsh J."/>
            <person name="Wang H."/>
            <person name="Weinstock K."/>
            <person name="West A.P."/>
            <person name="Willey D.L."/>
            <person name="Whitehead S.L."/>
            <person name="Wilming L."/>
            <person name="Wray P.W."/>
            <person name="Young L."/>
            <person name="Chen Y."/>
            <person name="Lovering R.C."/>
            <person name="Moschonas N.K."/>
            <person name="Siebert R."/>
            <person name="Fechtel K."/>
            <person name="Bentley D."/>
            <person name="Durbin R.M."/>
            <person name="Hubbard T."/>
            <person name="Doucette-Stamm L."/>
            <person name="Beck S."/>
            <person name="Smith D.R."/>
            <person name="Rogers J."/>
        </authorList>
    </citation>
    <scope>NUCLEOTIDE SEQUENCE [LARGE SCALE GENOMIC DNA]</scope>
</reference>
<reference key="4">
    <citation type="journal article" date="2008" name="Oncogene">
        <title>The E-cadherin-repressed hNanos1 gene induces tumor cell invasion by upregulating MT1-MMP expression.</title>
        <authorList>
            <person name="Bonnomet A."/>
            <person name="Polette M."/>
            <person name="Strumane K."/>
            <person name="Gilles C."/>
            <person name="Dalstein V."/>
            <person name="Kileztky C."/>
            <person name="Berx G."/>
            <person name="van Roy F."/>
            <person name="Birembaut P."/>
            <person name="Nawrocki-Raby B."/>
        </authorList>
    </citation>
    <scope>FUNCTION</scope>
    <scope>TISSUE SPECIFICITY</scope>
</reference>
<reference key="5">
    <citation type="journal article" date="2009" name="Mol. Hum. Reprod.">
        <title>The SNARE-associated component SNAPIN binds PUMILIO2 and NANOS1 proteins in human male germ cells.</title>
        <authorList>
            <person name="Ginter-Matuszewska B."/>
            <person name="Spik A."/>
            <person name="Rembiszewska A."/>
            <person name="Koyias C."/>
            <person name="Kupryjanczyk J."/>
            <person name="Jaruzelska J."/>
        </authorList>
    </citation>
    <scope>SUBCELLULAR LOCATION</scope>
    <scope>TISSUE SPECIFICITY</scope>
    <scope>INTERACTION WITH PUM2 AND SNAPIN</scope>
</reference>
<reference key="6">
    <citation type="journal article" date="2011" name="Histochem. Cell Biol.">
        <title>NANOS1 and PUMILIO2 bind microRNA biogenesis factor GEMIN3, within chromatoid body in human germ cells.</title>
        <authorList>
            <person name="Ginter-Matuszewska B."/>
            <person name="Kusz K."/>
            <person name="Spik A."/>
            <person name="Grzeszkowiak D."/>
            <person name="Rembiszewska A."/>
            <person name="Kupryjanczyk J."/>
            <person name="Jaruzelska J."/>
        </authorList>
    </citation>
    <scope>INTERACTION WITH DDX20</scope>
</reference>
<reference key="7">
    <citation type="journal article" date="2011" name="Hum. Mol. Genet.">
        <title>NANOS3 function in human germ cell development.</title>
        <authorList>
            <person name="Julaton V.T."/>
            <person name="Reijo Pera R.A."/>
        </authorList>
    </citation>
    <scope>TISSUE SPECIFICITY</scope>
    <scope>DEVELOPMENTAL STAGE</scope>
</reference>
<reference key="8">
    <citation type="journal article" date="2013" name="J. Med. Genet.">
        <title>Mutations of NANOS1, a human homologue of the Drosophila morphogen, are associated with a lack of germ cells in testes or severe oligo-astheno-teratozoospermia.</title>
        <authorList>
            <person name="Kusz-Zamelczyk K."/>
            <person name="Sajek M."/>
            <person name="Spik A."/>
            <person name="Glazar R."/>
            <person name="Jedrzejczak P."/>
            <person name="Latos-Bielenska A."/>
            <person name="Kotecki M."/>
            <person name="Pawelczyk L."/>
            <person name="Jaruzelska J."/>
        </authorList>
    </citation>
    <scope>VARIANTS SPGF12 SER-78 DEL AND ALA-173 DEL</scope>
    <scope>VARIANTS THR-34; HIS-246 AND TYR-276</scope>
</reference>
<keyword id="KW-0002">3D-structure</keyword>
<keyword id="KW-0963">Cytoplasm</keyword>
<keyword id="KW-0225">Disease variant</keyword>
<keyword id="KW-0479">Metal-binding</keyword>
<keyword id="KW-1267">Proteomics identification</keyword>
<keyword id="KW-1185">Reference proteome</keyword>
<keyword id="KW-0678">Repressor</keyword>
<keyword id="KW-0694">RNA-binding</keyword>
<keyword id="KW-0810">Translation regulation</keyword>
<keyword id="KW-0862">Zinc</keyword>
<keyword id="KW-0863">Zinc-finger</keyword>
<organism>
    <name type="scientific">Homo sapiens</name>
    <name type="common">Human</name>
    <dbReference type="NCBI Taxonomy" id="9606"/>
    <lineage>
        <taxon>Eukaryota</taxon>
        <taxon>Metazoa</taxon>
        <taxon>Chordata</taxon>
        <taxon>Craniata</taxon>
        <taxon>Vertebrata</taxon>
        <taxon>Euteleostomi</taxon>
        <taxon>Mammalia</taxon>
        <taxon>Eutheria</taxon>
        <taxon>Euarchontoglires</taxon>
        <taxon>Primates</taxon>
        <taxon>Haplorrhini</taxon>
        <taxon>Catarrhini</taxon>
        <taxon>Hominidae</taxon>
        <taxon>Homo</taxon>
    </lineage>
</organism>
<sequence>MEAFPWAPRSPRRGRAPPPMALVPSARYVSAPGPAHPQPFSSWNDYLGLATLITKAVDGEPRFGCARGGNGGGGSPPSSSSSSCCSPHTGAGPGALGPALGPPDYDEDDDDDSDEPGSRGRYLGSALELRALELCAGPAEAGLLEERFAELSPFAGRAAAVLLGCAPAAAAAATTTSEATPREERAPAWAAEPRLHAASGAAAARLLKPELQVCVFCRNNKEAMALYTTHILKGPDGRVLCPVLRRYTCPLCGASGDNAHTIKYCPLSKVPPPPARPPPRSARDGPPGKKLR</sequence>
<protein>
    <recommendedName>
        <fullName>Nanos homolog 1</fullName>
        <shortName>NOS-1</shortName>
    </recommendedName>
    <alternativeName>
        <fullName>EC_Rep1a</fullName>
    </alternativeName>
</protein>
<accession>Q8WY41</accession>
<evidence type="ECO:0000250" key="1"/>
<evidence type="ECO:0000255" key="2">
    <source>
        <dbReference type="PROSITE-ProRule" id="PRU00855"/>
    </source>
</evidence>
<evidence type="ECO:0000256" key="3">
    <source>
        <dbReference type="SAM" id="MobiDB-lite"/>
    </source>
</evidence>
<evidence type="ECO:0000269" key="4">
    <source>
    </source>
</evidence>
<evidence type="ECO:0000269" key="5">
    <source>
    </source>
</evidence>
<evidence type="ECO:0000269" key="6">
    <source>
    </source>
</evidence>
<evidence type="ECO:0000269" key="7">
    <source>
    </source>
</evidence>
<evidence type="ECO:0000269" key="8">
    <source>
    </source>
</evidence>
<evidence type="ECO:0000269" key="9">
    <source>
    </source>
</evidence>
<evidence type="ECO:0000269" key="10">
    <source>
    </source>
</evidence>
<evidence type="ECO:0007829" key="11">
    <source>
        <dbReference type="PDB" id="4CQO"/>
    </source>
</evidence>
<comment type="function">
    <text evidence="5 6">May act as a translational repressor which regulates translation of specific mRNAs by forming a complex with PUM2 that associates with the 3'-UTR of mRNA targets. Capable of interfering with the proadhesive and anti-invasive functions of E-cadherin. Up-regulates the production of MMP14 to promote tumor cell invasion.</text>
</comment>
<comment type="subunit">
    <text evidence="4 5 7 9">Interacts with PUM2, SNAPIN and CTNNB1. Interacts (via N-terminal region) with CTNND1. Interacts with DDX20 (via N-terminal region).</text>
</comment>
<comment type="interaction">
    <interactant intactId="EBI-9630165">
        <id>Q8WY41</id>
    </interactant>
    <interactant intactId="EBI-9634525">
        <id>O60716-21</id>
        <label>CTNND1</label>
    </interactant>
    <organismsDiffer>false</organismsDiffer>
    <experiments>2</experiments>
</comment>
<comment type="subcellular location">
    <subcellularLocation>
        <location evidence="4 5 7">Cytoplasm</location>
        <location evidence="4 5 7">Perinuclear region</location>
    </subcellularLocation>
    <subcellularLocation>
        <location evidence="4 5 7">Cytoplasm</location>
    </subcellularLocation>
    <text evidence="4 7">Colocalizes with SNAPIN and PUM2 in the perinuclear region of germ cells.</text>
</comment>
<comment type="tissue specificity">
    <text evidence="4 5 6 7 8">Testis and ovary (at protein level). Predominantly expressed in testis. Specifically expressed during germline development. In adult tissues, it is mainly expressed in spermatogonia, the stem cells of the germline. Also expressed during meiosis in spermatocytes. Not present in late, post-meiotic stage germ cells. Expressed in fetal ovaries, while it is weakly or not expressed in mature postmeiotic oocytes, suggesting that it may be expressed in premeiotic female germ cells. Expressed at high levels only in the E-cadherin deficient cell lines. Highly expressed in lung carcinomas and mostly detected in invasive tumor cells and its expression correlates with tumor aggressiveness.</text>
</comment>
<comment type="developmental stage">
    <text evidence="8">Fetal ovary and fetal testis (at protein level).</text>
</comment>
<comment type="induction">
    <text evidence="5">Down-regulated by E-cadherin.</text>
</comment>
<comment type="domain">
    <text evidence="2">The Nanos-type zinc finger is composed of two C2HC motifs, each motif binding one molecule of zinc. It is essential for the translation repression activity of the protein.</text>
</comment>
<comment type="domain">
    <text>The N-terminal region and C-terminal zinc-finger RNA-binding domain are both necessary for interaction with SNAPIN.</text>
</comment>
<comment type="disease" evidence="10">
    <disease id="DI-03877">
        <name>Spermatogenic failure 12</name>
        <acronym>SPGF12</acronym>
        <description>An infertility disorder caused by spermatogenesis defects. It results in decreased sperm motility, concentration, and multiple sperm structural defects. Non-obstructive azoospermia, oligozoospermia and oligo-astheno-teratozoospermia are features observed in SPGF12 patients.</description>
        <dbReference type="MIM" id="615413"/>
    </disease>
    <text>The disease is caused by variants affecting the gene represented in this entry.</text>
</comment>
<comment type="similarity">
    <text evidence="2">Belongs to the nanos family.</text>
</comment>
<gene>
    <name type="primary">NANOS1</name>
    <name type="synonym">NOS1</name>
</gene>
<proteinExistence type="evidence at protein level"/>